<accession>Q8CQ89</accession>
<gene>
    <name type="primary">ctsR</name>
    <name type="ordered locus">SE_0284</name>
</gene>
<comment type="function">
    <text evidence="1">Negative regulator of clpC, clpB and clpP transcription by binding directly and specifically to their promoter region.</text>
</comment>
<comment type="similarity">
    <text evidence="2">Belongs to the CtsR family.</text>
</comment>
<proteinExistence type="inferred from homology"/>
<keyword id="KW-0238">DNA-binding</keyword>
<keyword id="KW-0678">Repressor</keyword>
<keyword id="KW-0346">Stress response</keyword>
<keyword id="KW-0804">Transcription</keyword>
<keyword id="KW-0805">Transcription regulation</keyword>
<evidence type="ECO:0000250" key="1"/>
<evidence type="ECO:0000305" key="2"/>
<name>CTSR_STAES</name>
<organism>
    <name type="scientific">Staphylococcus epidermidis (strain ATCC 12228 / FDA PCI 1200)</name>
    <dbReference type="NCBI Taxonomy" id="176280"/>
    <lineage>
        <taxon>Bacteria</taxon>
        <taxon>Bacillati</taxon>
        <taxon>Bacillota</taxon>
        <taxon>Bacilli</taxon>
        <taxon>Bacillales</taxon>
        <taxon>Staphylococcaceae</taxon>
        <taxon>Staphylococcus</taxon>
    </lineage>
</organism>
<dbReference type="EMBL" id="AE015929">
    <property type="protein sequence ID" value="AAO03881.1"/>
    <property type="molecule type" value="Genomic_DNA"/>
</dbReference>
<dbReference type="RefSeq" id="NP_763839.1">
    <property type="nucleotide sequence ID" value="NC_004461.1"/>
</dbReference>
<dbReference type="RefSeq" id="WP_001832288.1">
    <property type="nucleotide sequence ID" value="NZ_WBME01000014.1"/>
</dbReference>
<dbReference type="SMR" id="Q8CQ89"/>
<dbReference type="KEGG" id="sep:SE_0284"/>
<dbReference type="PATRIC" id="fig|176280.10.peg.260"/>
<dbReference type="eggNOG" id="COG4463">
    <property type="taxonomic scope" value="Bacteria"/>
</dbReference>
<dbReference type="HOGENOM" id="CLU_118139_0_0_9"/>
<dbReference type="OrthoDB" id="1680813at2"/>
<dbReference type="Proteomes" id="UP000001411">
    <property type="component" value="Chromosome"/>
</dbReference>
<dbReference type="GO" id="GO:0003677">
    <property type="term" value="F:DNA binding"/>
    <property type="evidence" value="ECO:0007669"/>
    <property type="project" value="UniProtKB-KW"/>
</dbReference>
<dbReference type="GO" id="GO:0006355">
    <property type="term" value="P:regulation of DNA-templated transcription"/>
    <property type="evidence" value="ECO:0007669"/>
    <property type="project" value="InterPro"/>
</dbReference>
<dbReference type="FunFam" id="3.30.56.130:FF:000001">
    <property type="entry name" value="Transcriptional regulator CtsR"/>
    <property type="match status" value="1"/>
</dbReference>
<dbReference type="Gene3D" id="1.10.1200.150">
    <property type="entry name" value="Transcriptional regulator CtsR, C-terminal domain"/>
    <property type="match status" value="1"/>
</dbReference>
<dbReference type="Gene3D" id="3.30.56.130">
    <property type="entry name" value="Transcriptional regulator CtsR, winged HTH domain"/>
    <property type="match status" value="1"/>
</dbReference>
<dbReference type="InterPro" id="IPR008463">
    <property type="entry name" value="CtsR"/>
</dbReference>
<dbReference type="InterPro" id="IPR041473">
    <property type="entry name" value="CtsR_C"/>
</dbReference>
<dbReference type="InterPro" id="IPR041908">
    <property type="entry name" value="CtsR_C_sf"/>
</dbReference>
<dbReference type="InterPro" id="IPR040465">
    <property type="entry name" value="CtsR_N"/>
</dbReference>
<dbReference type="InterPro" id="IPR041902">
    <property type="entry name" value="CtsR_N_sf"/>
</dbReference>
<dbReference type="Pfam" id="PF05848">
    <property type="entry name" value="CtsR"/>
    <property type="match status" value="1"/>
</dbReference>
<dbReference type="Pfam" id="PF17727">
    <property type="entry name" value="CtsR_C"/>
    <property type="match status" value="1"/>
</dbReference>
<dbReference type="PIRSF" id="PIRSF010607">
    <property type="entry name" value="Txn_repr_CtsR"/>
    <property type="match status" value="1"/>
</dbReference>
<reference key="1">
    <citation type="journal article" date="2003" name="Mol. Microbiol.">
        <title>Genome-based analysis of virulence genes in a non-biofilm-forming Staphylococcus epidermidis strain (ATCC 12228).</title>
        <authorList>
            <person name="Zhang Y.-Q."/>
            <person name="Ren S.-X."/>
            <person name="Li H.-L."/>
            <person name="Wang Y.-X."/>
            <person name="Fu G."/>
            <person name="Yang J."/>
            <person name="Qin Z.-Q."/>
            <person name="Miao Y.-G."/>
            <person name="Wang W.-Y."/>
            <person name="Chen R.-S."/>
            <person name="Shen Y."/>
            <person name="Chen Z."/>
            <person name="Yuan Z.-H."/>
            <person name="Zhao G.-P."/>
            <person name="Qu D."/>
            <person name="Danchin A."/>
            <person name="Wen Y.-M."/>
        </authorList>
    </citation>
    <scope>NUCLEOTIDE SEQUENCE [LARGE SCALE GENOMIC DNA]</scope>
    <source>
        <strain>ATCC 12228 / FDA PCI 1200</strain>
    </source>
</reference>
<feature type="chain" id="PRO_0000274138" description="Transcriptional regulator CtsR">
    <location>
        <begin position="1"/>
        <end position="153"/>
    </location>
</feature>
<sequence>MHNMSDIIEQYIKRLFEEADEDVVEIQRAHIAQRFDCVPSQLNYVIKTRFTNEHGYEIESKRGGGGYIRITKIENKDATGYINHLLQLIGPSISQQQGYYVIDGLLDKGLINEREAKMIQTIIDRETLKMDVVARDIIRANILKRLLPVINYY</sequence>
<protein>
    <recommendedName>
        <fullName>Transcriptional regulator CtsR</fullName>
    </recommendedName>
</protein>